<reference key="1">
    <citation type="journal article" date="2005" name="Science">
        <title>The transcriptional landscape of the mammalian genome.</title>
        <authorList>
            <person name="Carninci P."/>
            <person name="Kasukawa T."/>
            <person name="Katayama S."/>
            <person name="Gough J."/>
            <person name="Frith M.C."/>
            <person name="Maeda N."/>
            <person name="Oyama R."/>
            <person name="Ravasi T."/>
            <person name="Lenhard B."/>
            <person name="Wells C."/>
            <person name="Kodzius R."/>
            <person name="Shimokawa K."/>
            <person name="Bajic V.B."/>
            <person name="Brenner S.E."/>
            <person name="Batalov S."/>
            <person name="Forrest A.R."/>
            <person name="Zavolan M."/>
            <person name="Davis M.J."/>
            <person name="Wilming L.G."/>
            <person name="Aidinis V."/>
            <person name="Allen J.E."/>
            <person name="Ambesi-Impiombato A."/>
            <person name="Apweiler R."/>
            <person name="Aturaliya R.N."/>
            <person name="Bailey T.L."/>
            <person name="Bansal M."/>
            <person name="Baxter L."/>
            <person name="Beisel K.W."/>
            <person name="Bersano T."/>
            <person name="Bono H."/>
            <person name="Chalk A.M."/>
            <person name="Chiu K.P."/>
            <person name="Choudhary V."/>
            <person name="Christoffels A."/>
            <person name="Clutterbuck D.R."/>
            <person name="Crowe M.L."/>
            <person name="Dalla E."/>
            <person name="Dalrymple B.P."/>
            <person name="de Bono B."/>
            <person name="Della Gatta G."/>
            <person name="di Bernardo D."/>
            <person name="Down T."/>
            <person name="Engstrom P."/>
            <person name="Fagiolini M."/>
            <person name="Faulkner G."/>
            <person name="Fletcher C.F."/>
            <person name="Fukushima T."/>
            <person name="Furuno M."/>
            <person name="Futaki S."/>
            <person name="Gariboldi M."/>
            <person name="Georgii-Hemming P."/>
            <person name="Gingeras T.R."/>
            <person name="Gojobori T."/>
            <person name="Green R.E."/>
            <person name="Gustincich S."/>
            <person name="Harbers M."/>
            <person name="Hayashi Y."/>
            <person name="Hensch T.K."/>
            <person name="Hirokawa N."/>
            <person name="Hill D."/>
            <person name="Huminiecki L."/>
            <person name="Iacono M."/>
            <person name="Ikeo K."/>
            <person name="Iwama A."/>
            <person name="Ishikawa T."/>
            <person name="Jakt M."/>
            <person name="Kanapin A."/>
            <person name="Katoh M."/>
            <person name="Kawasawa Y."/>
            <person name="Kelso J."/>
            <person name="Kitamura H."/>
            <person name="Kitano H."/>
            <person name="Kollias G."/>
            <person name="Krishnan S.P."/>
            <person name="Kruger A."/>
            <person name="Kummerfeld S.K."/>
            <person name="Kurochkin I.V."/>
            <person name="Lareau L.F."/>
            <person name="Lazarevic D."/>
            <person name="Lipovich L."/>
            <person name="Liu J."/>
            <person name="Liuni S."/>
            <person name="McWilliam S."/>
            <person name="Madan Babu M."/>
            <person name="Madera M."/>
            <person name="Marchionni L."/>
            <person name="Matsuda H."/>
            <person name="Matsuzawa S."/>
            <person name="Miki H."/>
            <person name="Mignone F."/>
            <person name="Miyake S."/>
            <person name="Morris K."/>
            <person name="Mottagui-Tabar S."/>
            <person name="Mulder N."/>
            <person name="Nakano N."/>
            <person name="Nakauchi H."/>
            <person name="Ng P."/>
            <person name="Nilsson R."/>
            <person name="Nishiguchi S."/>
            <person name="Nishikawa S."/>
            <person name="Nori F."/>
            <person name="Ohara O."/>
            <person name="Okazaki Y."/>
            <person name="Orlando V."/>
            <person name="Pang K.C."/>
            <person name="Pavan W.J."/>
            <person name="Pavesi G."/>
            <person name="Pesole G."/>
            <person name="Petrovsky N."/>
            <person name="Piazza S."/>
            <person name="Reed J."/>
            <person name="Reid J.F."/>
            <person name="Ring B.Z."/>
            <person name="Ringwald M."/>
            <person name="Rost B."/>
            <person name="Ruan Y."/>
            <person name="Salzberg S.L."/>
            <person name="Sandelin A."/>
            <person name="Schneider C."/>
            <person name="Schoenbach C."/>
            <person name="Sekiguchi K."/>
            <person name="Semple C.A."/>
            <person name="Seno S."/>
            <person name="Sessa L."/>
            <person name="Sheng Y."/>
            <person name="Shibata Y."/>
            <person name="Shimada H."/>
            <person name="Shimada K."/>
            <person name="Silva D."/>
            <person name="Sinclair B."/>
            <person name="Sperling S."/>
            <person name="Stupka E."/>
            <person name="Sugiura K."/>
            <person name="Sultana R."/>
            <person name="Takenaka Y."/>
            <person name="Taki K."/>
            <person name="Tammoja K."/>
            <person name="Tan S.L."/>
            <person name="Tang S."/>
            <person name="Taylor M.S."/>
            <person name="Tegner J."/>
            <person name="Teichmann S.A."/>
            <person name="Ueda H.R."/>
            <person name="van Nimwegen E."/>
            <person name="Verardo R."/>
            <person name="Wei C.L."/>
            <person name="Yagi K."/>
            <person name="Yamanishi H."/>
            <person name="Zabarovsky E."/>
            <person name="Zhu S."/>
            <person name="Zimmer A."/>
            <person name="Hide W."/>
            <person name="Bult C."/>
            <person name="Grimmond S.M."/>
            <person name="Teasdale R.D."/>
            <person name="Liu E.T."/>
            <person name="Brusic V."/>
            <person name="Quackenbush J."/>
            <person name="Wahlestedt C."/>
            <person name="Mattick J.S."/>
            <person name="Hume D.A."/>
            <person name="Kai C."/>
            <person name="Sasaki D."/>
            <person name="Tomaru Y."/>
            <person name="Fukuda S."/>
            <person name="Kanamori-Katayama M."/>
            <person name="Suzuki M."/>
            <person name="Aoki J."/>
            <person name="Arakawa T."/>
            <person name="Iida J."/>
            <person name="Imamura K."/>
            <person name="Itoh M."/>
            <person name="Kato T."/>
            <person name="Kawaji H."/>
            <person name="Kawagashira N."/>
            <person name="Kawashima T."/>
            <person name="Kojima M."/>
            <person name="Kondo S."/>
            <person name="Konno H."/>
            <person name="Nakano K."/>
            <person name="Ninomiya N."/>
            <person name="Nishio T."/>
            <person name="Okada M."/>
            <person name="Plessy C."/>
            <person name="Shibata K."/>
            <person name="Shiraki T."/>
            <person name="Suzuki S."/>
            <person name="Tagami M."/>
            <person name="Waki K."/>
            <person name="Watahiki A."/>
            <person name="Okamura-Oho Y."/>
            <person name="Suzuki H."/>
            <person name="Kawai J."/>
            <person name="Hayashizaki Y."/>
        </authorList>
    </citation>
    <scope>NUCLEOTIDE SEQUENCE [LARGE SCALE MRNA]</scope>
    <source>
        <strain>DBA/2J</strain>
    </source>
</reference>
<reference key="2">
    <citation type="journal article" date="2009" name="PLoS Biol.">
        <title>Lineage-specific biology revealed by a finished genome assembly of the mouse.</title>
        <authorList>
            <person name="Church D.M."/>
            <person name="Goodstadt L."/>
            <person name="Hillier L.W."/>
            <person name="Zody M.C."/>
            <person name="Goldstein S."/>
            <person name="She X."/>
            <person name="Bult C.J."/>
            <person name="Agarwala R."/>
            <person name="Cherry J.L."/>
            <person name="DiCuccio M."/>
            <person name="Hlavina W."/>
            <person name="Kapustin Y."/>
            <person name="Meric P."/>
            <person name="Maglott D."/>
            <person name="Birtle Z."/>
            <person name="Marques A.C."/>
            <person name="Graves T."/>
            <person name="Zhou S."/>
            <person name="Teague B."/>
            <person name="Potamousis K."/>
            <person name="Churas C."/>
            <person name="Place M."/>
            <person name="Herschleb J."/>
            <person name="Runnheim R."/>
            <person name="Forrest D."/>
            <person name="Amos-Landgraf J."/>
            <person name="Schwartz D.C."/>
            <person name="Cheng Z."/>
            <person name="Lindblad-Toh K."/>
            <person name="Eichler E.E."/>
            <person name="Ponting C.P."/>
        </authorList>
    </citation>
    <scope>NUCLEOTIDE SEQUENCE [LARGE SCALE GENOMIC DNA]</scope>
    <source>
        <strain>C57BL/6J</strain>
    </source>
</reference>
<reference key="3">
    <citation type="journal article" date="2005" name="Nucleic Acids Res.">
        <title>The replacement histone H2A.Z in a hyperacetylated form is a feature of active genes in the chicken.</title>
        <authorList>
            <person name="Bruce K."/>
            <person name="Myers F.A."/>
            <person name="Mantouvalou E."/>
            <person name="Lefevre P."/>
            <person name="Greaves I."/>
            <person name="Bonifer C."/>
            <person name="Tremethick D.J."/>
            <person name="Thorne A.W."/>
            <person name="Crane-Robinson C."/>
        </authorList>
    </citation>
    <scope>ACETYLATION AT LYS-5; LYS-8 AND LYS-12</scope>
</reference>
<dbReference type="EMBL" id="AK021267">
    <property type="protein sequence ID" value="BAB32354.1"/>
    <property type="molecule type" value="mRNA"/>
</dbReference>
<dbReference type="EMBL" id="AK155105">
    <property type="protein sequence ID" value="BAE33050.1"/>
    <property type="molecule type" value="mRNA"/>
</dbReference>
<dbReference type="EMBL" id="AK168110">
    <property type="protein sequence ID" value="BAE40081.1"/>
    <property type="molecule type" value="mRNA"/>
</dbReference>
<dbReference type="EMBL" id="AL646020">
    <property type="protein sequence ID" value="CAI26006.1"/>
    <property type="molecule type" value="Genomic_DNA"/>
</dbReference>
<dbReference type="CCDS" id="CCDS48750.1"/>
<dbReference type="RefSeq" id="NP_084214.1">
    <property type="nucleotide sequence ID" value="NM_029938.1"/>
</dbReference>
<dbReference type="SMR" id="Q3THW5"/>
<dbReference type="BioGRID" id="218792">
    <property type="interactions" value="3"/>
</dbReference>
<dbReference type="ComplexPortal" id="CPX-5716">
    <property type="entry name" value="Nucleosome, variant H3.1-H2A.V-H2B.1"/>
</dbReference>
<dbReference type="FunCoup" id="Q3THW5">
    <property type="interactions" value="3118"/>
</dbReference>
<dbReference type="IntAct" id="Q3THW5">
    <property type="interactions" value="1"/>
</dbReference>
<dbReference type="STRING" id="10090.ENSMUSP00000105359"/>
<dbReference type="iPTMnet" id="Q3THW5"/>
<dbReference type="PhosphoSitePlus" id="Q3THW5"/>
<dbReference type="jPOST" id="Q3THW5"/>
<dbReference type="PaxDb" id="10090-ENSMUSP00000105359"/>
<dbReference type="Pumba" id="Q3THW5"/>
<dbReference type="Antibodypedia" id="27370">
    <property type="antibodies" value="95 antibodies from 17 providers"/>
</dbReference>
<dbReference type="DNASU" id="77605"/>
<dbReference type="Ensembl" id="ENSMUST00000109737.9">
    <property type="protein sequence ID" value="ENSMUSP00000105359.3"/>
    <property type="gene ID" value="ENSMUSG00000041126.17"/>
</dbReference>
<dbReference type="GeneID" id="77605"/>
<dbReference type="KEGG" id="mmu:77605"/>
<dbReference type="UCSC" id="uc007hyp.2">
    <property type="organism name" value="mouse"/>
</dbReference>
<dbReference type="AGR" id="MGI:1924855"/>
<dbReference type="CTD" id="94239"/>
<dbReference type="MGI" id="MGI:1924855">
    <property type="gene designation" value="H2az2"/>
</dbReference>
<dbReference type="VEuPathDB" id="HostDB:ENSMUSG00000041126"/>
<dbReference type="eggNOG" id="KOG1757">
    <property type="taxonomic scope" value="Eukaryota"/>
</dbReference>
<dbReference type="GeneTree" id="ENSGT00900000140979"/>
<dbReference type="HOGENOM" id="CLU_062828_2_2_1"/>
<dbReference type="InParanoid" id="Q3THW5"/>
<dbReference type="OMA" id="MNKKGAP"/>
<dbReference type="OrthoDB" id="9421954at2759"/>
<dbReference type="PhylomeDB" id="Q3THW5"/>
<dbReference type="TreeFam" id="TF354232"/>
<dbReference type="Reactome" id="R-MMU-110330">
    <property type="pathway name" value="Recognition and association of DNA glycosylase with site containing an affected purine"/>
</dbReference>
<dbReference type="Reactome" id="R-MMU-110331">
    <property type="pathway name" value="Cleavage of the damaged purine"/>
</dbReference>
<dbReference type="Reactome" id="R-MMU-212300">
    <property type="pathway name" value="PRC2 methylates histones and DNA"/>
</dbReference>
<dbReference type="Reactome" id="R-MMU-2299718">
    <property type="pathway name" value="Condensation of Prophase Chromosomes"/>
</dbReference>
<dbReference type="Reactome" id="R-MMU-2559586">
    <property type="pathway name" value="DNA Damage/Telomere Stress Induced Senescence"/>
</dbReference>
<dbReference type="Reactome" id="R-MMU-606279">
    <property type="pathway name" value="Deposition of new CENPA-containing nucleosomes at the centromere"/>
</dbReference>
<dbReference type="Reactome" id="R-MMU-8936459">
    <property type="pathway name" value="RUNX1 regulates genes involved in megakaryocyte differentiation and platelet function"/>
</dbReference>
<dbReference type="Reactome" id="R-MMU-9670095">
    <property type="pathway name" value="Inhibition of DNA recombination at telomere"/>
</dbReference>
<dbReference type="Reactome" id="R-MMU-9841922">
    <property type="pathway name" value="MLL4 and MLL3 complexes regulate expression of PPARG target genes in adipogenesis and hepatic steatosis"/>
</dbReference>
<dbReference type="Reactome" id="R-MMU-9843940">
    <property type="pathway name" value="Regulation of endogenous retroelements by KRAB-ZFP proteins"/>
</dbReference>
<dbReference type="BioGRID-ORCS" id="77605">
    <property type="hits" value="2 hits in 77 CRISPR screens"/>
</dbReference>
<dbReference type="ChiTaRS" id="H2afv">
    <property type="organism name" value="mouse"/>
</dbReference>
<dbReference type="PRO" id="PR:Q3THW5"/>
<dbReference type="Proteomes" id="UP000000589">
    <property type="component" value="Chromosome 11"/>
</dbReference>
<dbReference type="RNAct" id="Q3THW5">
    <property type="molecule type" value="protein"/>
</dbReference>
<dbReference type="Bgee" id="ENSMUSG00000041126">
    <property type="expression patterns" value="Expressed in floor plate of midbrain and 269 other cell types or tissues"/>
</dbReference>
<dbReference type="ExpressionAtlas" id="Q3THW5">
    <property type="expression patterns" value="baseline and differential"/>
</dbReference>
<dbReference type="GO" id="GO:0000786">
    <property type="term" value="C:nucleosome"/>
    <property type="evidence" value="ECO:0000266"/>
    <property type="project" value="ComplexPortal"/>
</dbReference>
<dbReference type="GO" id="GO:0005634">
    <property type="term" value="C:nucleus"/>
    <property type="evidence" value="ECO:0007669"/>
    <property type="project" value="UniProtKB-SubCell"/>
</dbReference>
<dbReference type="GO" id="GO:0003677">
    <property type="term" value="F:DNA binding"/>
    <property type="evidence" value="ECO:0007669"/>
    <property type="project" value="UniProtKB-KW"/>
</dbReference>
<dbReference type="GO" id="GO:0046982">
    <property type="term" value="F:protein heterodimerization activity"/>
    <property type="evidence" value="ECO:0007669"/>
    <property type="project" value="InterPro"/>
</dbReference>
<dbReference type="GO" id="GO:0030527">
    <property type="term" value="F:structural constituent of chromatin"/>
    <property type="evidence" value="ECO:0007669"/>
    <property type="project" value="InterPro"/>
</dbReference>
<dbReference type="GO" id="GO:0006325">
    <property type="term" value="P:chromatin organization"/>
    <property type="evidence" value="ECO:0000303"/>
    <property type="project" value="ComplexPortal"/>
</dbReference>
<dbReference type="CDD" id="cd00074">
    <property type="entry name" value="HFD_H2A"/>
    <property type="match status" value="1"/>
</dbReference>
<dbReference type="FunFam" id="1.10.20.10:FF:000005">
    <property type="entry name" value="Histone H2A"/>
    <property type="match status" value="1"/>
</dbReference>
<dbReference type="Gene3D" id="1.10.20.10">
    <property type="entry name" value="Histone, subunit A"/>
    <property type="match status" value="1"/>
</dbReference>
<dbReference type="InterPro" id="IPR009072">
    <property type="entry name" value="Histone-fold"/>
</dbReference>
<dbReference type="InterPro" id="IPR002119">
    <property type="entry name" value="Histone_H2A"/>
</dbReference>
<dbReference type="InterPro" id="IPR007125">
    <property type="entry name" value="Histone_H2A/H2B/H3"/>
</dbReference>
<dbReference type="InterPro" id="IPR032454">
    <property type="entry name" value="Histone_H2A_C"/>
</dbReference>
<dbReference type="InterPro" id="IPR032458">
    <property type="entry name" value="Histone_H2A_CS"/>
</dbReference>
<dbReference type="PANTHER" id="PTHR23430">
    <property type="entry name" value="HISTONE H2A"/>
    <property type="match status" value="1"/>
</dbReference>
<dbReference type="Pfam" id="PF00125">
    <property type="entry name" value="Histone"/>
    <property type="match status" value="1"/>
</dbReference>
<dbReference type="Pfam" id="PF16211">
    <property type="entry name" value="Histone_H2A_C"/>
    <property type="match status" value="1"/>
</dbReference>
<dbReference type="PRINTS" id="PR00620">
    <property type="entry name" value="HISTONEH2A"/>
</dbReference>
<dbReference type="SMART" id="SM00414">
    <property type="entry name" value="H2A"/>
    <property type="match status" value="1"/>
</dbReference>
<dbReference type="SUPFAM" id="SSF47113">
    <property type="entry name" value="Histone-fold"/>
    <property type="match status" value="1"/>
</dbReference>
<dbReference type="PROSITE" id="PS00046">
    <property type="entry name" value="HISTONE_H2A"/>
    <property type="match status" value="1"/>
</dbReference>
<sequence length="128" mass="13509">MAGGKAGKDSGKAKAKAVSRSQRAGLQFPVGRIHRHLKTRTTSHGRVGATAAVYSAAILEYLTAEVLELAGNASKDLKVKRITPRHLQLAIRGDEELDSLIKATIAGGGVIPHIHKSLIGKKGQQKTA</sequence>
<proteinExistence type="evidence at protein level"/>
<gene>
    <name evidence="6" type="primary">H2az2</name>
    <name evidence="6" type="synonym">H2afv</name>
    <name type="synonym">H2av</name>
</gene>
<accession>Q3THW5</accession>
<accession>Q5NC92</accession>
<accession>Q6ZWU0</accession>
<name>H2AV_MOUSE</name>
<evidence type="ECO:0000250" key="1"/>
<evidence type="ECO:0000250" key="2">
    <source>
        <dbReference type="UniProtKB" id="P0C0S5"/>
    </source>
</evidence>
<evidence type="ECO:0000256" key="3">
    <source>
        <dbReference type="SAM" id="MobiDB-lite"/>
    </source>
</evidence>
<evidence type="ECO:0000269" key="4">
    <source>
    </source>
</evidence>
<evidence type="ECO:0000305" key="5"/>
<evidence type="ECO:0000312" key="6">
    <source>
        <dbReference type="MGI" id="MGI:1924855"/>
    </source>
</evidence>
<protein>
    <recommendedName>
        <fullName>Histone H2A.V</fullName>
    </recommendedName>
    <alternativeName>
        <fullName>H2A.F/Z</fullName>
    </alternativeName>
    <alternativeName>
        <fullName evidence="6">H2A.Z variant histone 2</fullName>
    </alternativeName>
</protein>
<comment type="function">
    <text evidence="1">Variant histone H2A which replaces conventional H2A in a subset of nucleosomes. Nucleosomes wrap and compact DNA into chromatin, limiting DNA accessibility to the cellular machineries which require DNA as a template. Histones thereby play a central role in transcription regulation, DNA repair, DNA replication and chromosomal stability. DNA accessibility is regulated via a complex set of post-translational modifications of histones, also called histone code, and nucleosome remodeling. May be involved in the formation of constitutive heterochromatin. May be required for chromosome segregation during cell division (By similarity).</text>
</comment>
<comment type="subunit">
    <text evidence="1">The nucleosome is a histone octamer containing two molecules each of H2A, H2B, H3 and H4 assembled in one H3-H4 heterotetramer and two H2A-H2B heterodimers. The octamer wraps approximately 147 bp of DNA. H2A or its variant H2AZ2 forms a heterodimer with H2B (By similarity).</text>
</comment>
<comment type="subcellular location">
    <subcellularLocation>
        <location evidence="1">Nucleus</location>
    </subcellularLocation>
    <subcellularLocation>
        <location evidence="1">Chromosome</location>
    </subcellularLocation>
</comment>
<comment type="PTM">
    <text evidence="1">Monoubiquitination of Lys-122 gives a specific tag for epigenetic transcriptional repression.</text>
</comment>
<comment type="PTM">
    <text evidence="4">Acetylated on Lys-5, Lys-8 and Lys-12 during interphase. Acetylation disappears at mitosis.</text>
</comment>
<comment type="similarity">
    <text evidence="5">Belongs to the histone H2A family.</text>
</comment>
<feature type="initiator methionine" description="Removed" evidence="5">
    <location>
        <position position="1"/>
    </location>
</feature>
<feature type="chain" id="PRO_0000239069" description="Histone H2A.V">
    <location>
        <begin position="2"/>
        <end position="128"/>
    </location>
</feature>
<feature type="region of interest" description="Disordered" evidence="3">
    <location>
        <begin position="1"/>
        <end position="23"/>
    </location>
</feature>
<feature type="compositionally biased region" description="Basic and acidic residues" evidence="3">
    <location>
        <begin position="1"/>
        <end position="12"/>
    </location>
</feature>
<feature type="modified residue" description="N6-acetyllysine" evidence="4">
    <location>
        <position position="5"/>
    </location>
</feature>
<feature type="modified residue" description="N6-acetyllysine" evidence="4">
    <location>
        <position position="8"/>
    </location>
</feature>
<feature type="modified residue" description="N6-acetyllysine" evidence="4">
    <location>
        <position position="12"/>
    </location>
</feature>
<feature type="modified residue" description="N6-lactoyllysine; alternate" evidence="2">
    <location>
        <position position="12"/>
    </location>
</feature>
<feature type="modified residue" description="N6-lactoyllysine; alternate" evidence="2">
    <location>
        <position position="14"/>
    </location>
</feature>
<feature type="modified residue" description="N6-lactoyllysine" evidence="2">
    <location>
        <position position="116"/>
    </location>
</feature>
<feature type="sequence conflict" description="In Ref. 2; CAI26006." evidence="5" ref="2">
    <original>A</original>
    <variation>VA</variation>
    <location>
        <position position="2"/>
    </location>
</feature>
<feature type="sequence conflict" description="In Ref. 1; BAE40081." evidence="5" ref="1">
    <original>Q</original>
    <variation>E</variation>
    <location>
        <position position="27"/>
    </location>
</feature>
<organism>
    <name type="scientific">Mus musculus</name>
    <name type="common">Mouse</name>
    <dbReference type="NCBI Taxonomy" id="10090"/>
    <lineage>
        <taxon>Eukaryota</taxon>
        <taxon>Metazoa</taxon>
        <taxon>Chordata</taxon>
        <taxon>Craniata</taxon>
        <taxon>Vertebrata</taxon>
        <taxon>Euteleostomi</taxon>
        <taxon>Mammalia</taxon>
        <taxon>Eutheria</taxon>
        <taxon>Euarchontoglires</taxon>
        <taxon>Glires</taxon>
        <taxon>Rodentia</taxon>
        <taxon>Myomorpha</taxon>
        <taxon>Muroidea</taxon>
        <taxon>Muridae</taxon>
        <taxon>Murinae</taxon>
        <taxon>Mus</taxon>
        <taxon>Mus</taxon>
    </lineage>
</organism>
<keyword id="KW-0007">Acetylation</keyword>
<keyword id="KW-0158">Chromosome</keyword>
<keyword id="KW-0238">DNA-binding</keyword>
<keyword id="KW-0544">Nucleosome core</keyword>
<keyword id="KW-0539">Nucleus</keyword>
<keyword id="KW-1185">Reference proteome</keyword>
<keyword id="KW-0832">Ubl conjugation</keyword>